<name>NTNF_NECSZ</name>
<dbReference type="EC" id="2.5.1.-" evidence="6"/>
<dbReference type="EMBL" id="MH182999">
    <property type="protein sequence ID" value="AYO60866.1"/>
    <property type="molecule type" value="mRNA"/>
</dbReference>
<dbReference type="SMR" id="A0A455LM21"/>
<dbReference type="UniPathway" id="UPA00213"/>
<dbReference type="GO" id="GO:0005886">
    <property type="term" value="C:plasma membrane"/>
    <property type="evidence" value="ECO:0007669"/>
    <property type="project" value="TreeGrafter"/>
</dbReference>
<dbReference type="GO" id="GO:0016765">
    <property type="term" value="F:transferase activity, transferring alkyl or aryl (other than methyl) groups"/>
    <property type="evidence" value="ECO:0007669"/>
    <property type="project" value="InterPro"/>
</dbReference>
<dbReference type="GO" id="GO:0016114">
    <property type="term" value="P:terpenoid biosynthetic process"/>
    <property type="evidence" value="ECO:0007669"/>
    <property type="project" value="UniProtKB-UniPathway"/>
</dbReference>
<dbReference type="CDD" id="cd13959">
    <property type="entry name" value="PT_UbiA_COQ2"/>
    <property type="match status" value="1"/>
</dbReference>
<dbReference type="FunFam" id="1.10.357.140:FF:000008">
    <property type="entry name" value="4-hydroxybenzoate octaprenyltransferase"/>
    <property type="match status" value="1"/>
</dbReference>
<dbReference type="Gene3D" id="1.10.357.140">
    <property type="entry name" value="UbiA prenyltransferase"/>
    <property type="match status" value="1"/>
</dbReference>
<dbReference type="InterPro" id="IPR039653">
    <property type="entry name" value="Prenyltransferase"/>
</dbReference>
<dbReference type="InterPro" id="IPR000537">
    <property type="entry name" value="UbiA_prenyltransferase"/>
</dbReference>
<dbReference type="InterPro" id="IPR030470">
    <property type="entry name" value="UbiA_prenylTrfase_CS"/>
</dbReference>
<dbReference type="InterPro" id="IPR044878">
    <property type="entry name" value="UbiA_sf"/>
</dbReference>
<dbReference type="PANTHER" id="PTHR11048:SF28">
    <property type="entry name" value="4-HYDROXYBENZOATE POLYPRENYLTRANSFERASE, MITOCHONDRIAL"/>
    <property type="match status" value="1"/>
</dbReference>
<dbReference type="PANTHER" id="PTHR11048">
    <property type="entry name" value="PRENYLTRANSFERASES"/>
    <property type="match status" value="1"/>
</dbReference>
<dbReference type="Pfam" id="PF01040">
    <property type="entry name" value="UbiA"/>
    <property type="match status" value="1"/>
</dbReference>
<dbReference type="PROSITE" id="PS00943">
    <property type="entry name" value="UBIA"/>
    <property type="match status" value="1"/>
</dbReference>
<organism>
    <name type="scientific">Nectria sp</name>
    <dbReference type="NCBI Taxonomy" id="1755444"/>
    <lineage>
        <taxon>Eukaryota</taxon>
        <taxon>Fungi</taxon>
        <taxon>Dikarya</taxon>
        <taxon>Ascomycota</taxon>
        <taxon>Pezizomycotina</taxon>
        <taxon>Sordariomycetes</taxon>
        <taxon>Hypocreomycetidae</taxon>
        <taxon>Hypocreales</taxon>
        <taxon>Nectriaceae</taxon>
        <taxon>Nectria</taxon>
    </lineage>
</organism>
<gene>
    <name evidence="4" type="primary">ntnF</name>
</gene>
<comment type="function">
    <text evidence="3 6">olyprenyl transferase; part of the gene cluster that mediates the biosynthesis of the meroterpenoids nectripenoids A and B, as well as cochliquninone D and isocochliquninone E (PubMed:29797385). The pathway probably begins with the HR-PKS ntnH that catalyzes two chain-extension steps to form a reduced triketide, which then primes the SAT domain in the NR-PKS ntnG to initiate three more cycles of extension to give a linear hexaketide corresponding to the polyketide part of nectripenoids (Probable). The FAD-dependent monooxygenase ntnJ then performs an oxidative decarboxylation at C11 of the ntnH/ntnG product, via an electrophilic aromatic hydroxylation with concomitant ipso-decarboxylation (Probable). The membrane-bound polyprenyl transferase ntnF then introduces a farnesyl group before the FAD-dependent monooxygenase ntnK functions as the first epoxidase on terminal C12'-C13' olefin, followed by a second epoxidation on C7'-C8' catalyzed by ntnA (Probable). The terpene cyclase/mutase ntnI then initiates the sequential tricyclic ring formation through protonation of the terminal epoxide and catalyzes the regioselective and stereoselective 6/6/6-tricyclic ring formation (Probable). The cytochrome P450 monooxygenase ntnM may then hydroxylate C1' (Probable).</text>
</comment>
<comment type="cofactor">
    <cofactor evidence="1">
        <name>Mg(2+)</name>
        <dbReference type="ChEBI" id="CHEBI:18420"/>
    </cofactor>
</comment>
<comment type="pathway">
    <text evidence="6">Secondary metabolite biosynthesis; terpenoid biosynthesis.</text>
</comment>
<comment type="subcellular location">
    <subcellularLocation>
        <location evidence="2">Membrane</location>
        <topology evidence="2">Multi-pass membrane protein</topology>
    </subcellularLocation>
</comment>
<comment type="similarity">
    <text evidence="5">Belongs to the UbiA prenyltransferase family.</text>
</comment>
<reference key="1">
    <citation type="journal article" date="2018" name="Angew. Chem. Int. Ed.">
        <title>Genome mining and comparative biosynthesis of meroterpenoids from two phylogenetically distinct fungi.</title>
        <authorList>
            <person name="Zhang X."/>
            <person name="Wang T.T."/>
            <person name="Xu Q.L."/>
            <person name="Xiong Y."/>
            <person name="Zhang L."/>
            <person name="Han H."/>
            <person name="Xu K."/>
            <person name="Guo W.J."/>
            <person name="Xu Q."/>
            <person name="Tan R.X."/>
            <person name="Ge H.M."/>
        </authorList>
    </citation>
    <scope>NUCLEOTIDE SEQUENCE [MRNA]</scope>
    <scope>FUNCTION</scope>
    <scope>PATHWAY</scope>
    <source>
        <strain>Z14-w</strain>
    </source>
</reference>
<sequence>MAAAGARHYTSKDGSQHDLVRGIWKLLRLHTPEGLSTASIGWLALFFYAIQQQLSFESLRYTFLGIFACYQITHGVFCMWNDICDRDFDAQVARTKKRPLPSGMVTYTEAMVAFIIGLALSLGVTYAMLGEDVTLTMGPIWGLSFIYPLCKRAIWAPQAVLGLTMAACVLPPWVALGNDATNAKLPASLFGAIFSWLVYLDLIYASQDRPDDEKAGVKSLAVFLGDKLKACLTVLGALQIAFFAVAAFEASASSFLWVFGIAVWAISVPWSILSLNPRDRNSGGRIFLVNAILGIYLAAVSGTDVWLSSR</sequence>
<proteinExistence type="evidence at transcript level"/>
<protein>
    <recommendedName>
        <fullName evidence="4">Polyprenyl transferase ntnF</fullName>
        <ecNumber evidence="6">2.5.1.-</ecNumber>
    </recommendedName>
    <alternativeName>
        <fullName evidence="4">Nectripenoid biosynthesis cluster protein F</fullName>
    </alternativeName>
</protein>
<evidence type="ECO:0000250" key="1">
    <source>
        <dbReference type="UniProtKB" id="P32378"/>
    </source>
</evidence>
<evidence type="ECO:0000255" key="2"/>
<evidence type="ECO:0000269" key="3">
    <source>
    </source>
</evidence>
<evidence type="ECO:0000303" key="4">
    <source>
    </source>
</evidence>
<evidence type="ECO:0000305" key="5"/>
<evidence type="ECO:0000305" key="6">
    <source>
    </source>
</evidence>
<keyword id="KW-0472">Membrane</keyword>
<keyword id="KW-0808">Transferase</keyword>
<keyword id="KW-0812">Transmembrane</keyword>
<keyword id="KW-1133">Transmembrane helix</keyword>
<accession>A0A455LM21</accession>
<feature type="chain" id="PRO_0000452567" description="Polyprenyl transferase ntnF">
    <location>
        <begin position="1"/>
        <end position="310"/>
    </location>
</feature>
<feature type="transmembrane region" description="Helical" evidence="2">
    <location>
        <begin position="30"/>
        <end position="50"/>
    </location>
</feature>
<feature type="transmembrane region" description="Helical" evidence="2">
    <location>
        <begin position="63"/>
        <end position="83"/>
    </location>
</feature>
<feature type="transmembrane region" description="Helical" evidence="2">
    <location>
        <begin position="110"/>
        <end position="130"/>
    </location>
</feature>
<feature type="transmembrane region" description="Helical" evidence="2">
    <location>
        <begin position="154"/>
        <end position="174"/>
    </location>
</feature>
<feature type="transmembrane region" description="Helical" evidence="2">
    <location>
        <begin position="185"/>
        <end position="205"/>
    </location>
</feature>
<feature type="transmembrane region" description="Helical" evidence="2">
    <location>
        <begin position="230"/>
        <end position="250"/>
    </location>
</feature>
<feature type="transmembrane region" description="Helical" evidence="2">
    <location>
        <begin position="255"/>
        <end position="275"/>
    </location>
</feature>
<feature type="transmembrane region" description="Helical" evidence="2">
    <location>
        <begin position="286"/>
        <end position="306"/>
    </location>
</feature>